<organism>
    <name type="scientific">Hahella chejuensis (strain KCTC 2396)</name>
    <dbReference type="NCBI Taxonomy" id="349521"/>
    <lineage>
        <taxon>Bacteria</taxon>
        <taxon>Pseudomonadati</taxon>
        <taxon>Pseudomonadota</taxon>
        <taxon>Gammaproteobacteria</taxon>
        <taxon>Oceanospirillales</taxon>
        <taxon>Hahellaceae</taxon>
        <taxon>Hahella</taxon>
    </lineage>
</organism>
<gene>
    <name evidence="1" type="primary">aroE</name>
    <name type="ordered locus">HCH_00037</name>
</gene>
<feature type="chain" id="PRO_1000021287" description="Shikimate dehydrogenase (NADP(+))">
    <location>
        <begin position="1"/>
        <end position="270"/>
    </location>
</feature>
<feature type="active site" description="Proton acceptor" evidence="1">
    <location>
        <position position="65"/>
    </location>
</feature>
<feature type="binding site" evidence="1">
    <location>
        <begin position="14"/>
        <end position="16"/>
    </location>
    <ligand>
        <name>shikimate</name>
        <dbReference type="ChEBI" id="CHEBI:36208"/>
    </ligand>
</feature>
<feature type="binding site" evidence="1">
    <location>
        <position position="61"/>
    </location>
    <ligand>
        <name>shikimate</name>
        <dbReference type="ChEBI" id="CHEBI:36208"/>
    </ligand>
</feature>
<feature type="binding site" evidence="1">
    <location>
        <position position="86"/>
    </location>
    <ligand>
        <name>shikimate</name>
        <dbReference type="ChEBI" id="CHEBI:36208"/>
    </ligand>
</feature>
<feature type="binding site" evidence="1">
    <location>
        <position position="101"/>
    </location>
    <ligand>
        <name>shikimate</name>
        <dbReference type="ChEBI" id="CHEBI:36208"/>
    </ligand>
</feature>
<feature type="binding site" evidence="1">
    <location>
        <begin position="126"/>
        <end position="130"/>
    </location>
    <ligand>
        <name>NADP(+)</name>
        <dbReference type="ChEBI" id="CHEBI:58349"/>
    </ligand>
</feature>
<feature type="binding site" evidence="1">
    <location>
        <begin position="150"/>
        <end position="155"/>
    </location>
    <ligand>
        <name>NADP(+)</name>
        <dbReference type="ChEBI" id="CHEBI:58349"/>
    </ligand>
</feature>
<feature type="binding site" evidence="1">
    <location>
        <position position="213"/>
    </location>
    <ligand>
        <name>NADP(+)</name>
        <dbReference type="ChEBI" id="CHEBI:58349"/>
    </ligand>
</feature>
<feature type="binding site" evidence="1">
    <location>
        <position position="215"/>
    </location>
    <ligand>
        <name>shikimate</name>
        <dbReference type="ChEBI" id="CHEBI:36208"/>
    </ligand>
</feature>
<feature type="binding site" evidence="1">
    <location>
        <position position="237"/>
    </location>
    <ligand>
        <name>NADP(+)</name>
        <dbReference type="ChEBI" id="CHEBI:58349"/>
    </ligand>
</feature>
<sequence length="270" mass="28523">MDMYAVVGNPVSHSKSPKIHGMFAQQTGESLEYTAIQAPLDGFRETVESFFIGGGKGLNVTVPFKEQAWNIVSERSHRAELAGAVNTLLQRDGRLFGDNTDGEGLVRDICVNQGVALSGKKILLVGAGGAVKGVMAPLLDEGPASIVVANRTVSKAEDLARIFGRNGVVCARAFADLEGPFDVIINGTSASLAGDIPPLPDAVIASHTFTYDMMYSLRDTAFVAWAKARGAAHCCDGLGMLVEQAAAAFYLWRGVRPDTAPVLAGLRQGD</sequence>
<comment type="function">
    <text evidence="1">Involved in the biosynthesis of the chorismate, which leads to the biosynthesis of aromatic amino acids. Catalyzes the reversible NADPH linked reduction of 3-dehydroshikimate (DHSA) to yield shikimate (SA).</text>
</comment>
<comment type="catalytic activity">
    <reaction evidence="1">
        <text>shikimate + NADP(+) = 3-dehydroshikimate + NADPH + H(+)</text>
        <dbReference type="Rhea" id="RHEA:17737"/>
        <dbReference type="ChEBI" id="CHEBI:15378"/>
        <dbReference type="ChEBI" id="CHEBI:16630"/>
        <dbReference type="ChEBI" id="CHEBI:36208"/>
        <dbReference type="ChEBI" id="CHEBI:57783"/>
        <dbReference type="ChEBI" id="CHEBI:58349"/>
        <dbReference type="EC" id="1.1.1.25"/>
    </reaction>
</comment>
<comment type="pathway">
    <text evidence="1">Metabolic intermediate biosynthesis; chorismate biosynthesis; chorismate from D-erythrose 4-phosphate and phosphoenolpyruvate: step 4/7.</text>
</comment>
<comment type="subunit">
    <text evidence="1">Homodimer.</text>
</comment>
<comment type="similarity">
    <text evidence="1">Belongs to the shikimate dehydrogenase family.</text>
</comment>
<accession>Q2SQW5</accession>
<reference key="1">
    <citation type="journal article" date="2005" name="Nucleic Acids Res.">
        <title>Genomic blueprint of Hahella chejuensis, a marine microbe producing an algicidal agent.</title>
        <authorList>
            <person name="Jeong H."/>
            <person name="Yim J.H."/>
            <person name="Lee C."/>
            <person name="Choi S.-H."/>
            <person name="Park Y.K."/>
            <person name="Yoon S.H."/>
            <person name="Hur C.-G."/>
            <person name="Kang H.-Y."/>
            <person name="Kim D."/>
            <person name="Lee H.H."/>
            <person name="Park K.H."/>
            <person name="Park S.-H."/>
            <person name="Park H.-S."/>
            <person name="Lee H.K."/>
            <person name="Oh T.K."/>
            <person name="Kim J.F."/>
        </authorList>
    </citation>
    <scope>NUCLEOTIDE SEQUENCE [LARGE SCALE GENOMIC DNA]</scope>
    <source>
        <strain>KCTC 2396</strain>
    </source>
</reference>
<dbReference type="EC" id="1.1.1.25" evidence="1"/>
<dbReference type="EMBL" id="CP000155">
    <property type="protein sequence ID" value="ABC26959.1"/>
    <property type="molecule type" value="Genomic_DNA"/>
</dbReference>
<dbReference type="RefSeq" id="WP_011394036.1">
    <property type="nucleotide sequence ID" value="NC_007645.1"/>
</dbReference>
<dbReference type="SMR" id="Q2SQW5"/>
<dbReference type="STRING" id="349521.HCH_00037"/>
<dbReference type="KEGG" id="hch:HCH_00037"/>
<dbReference type="eggNOG" id="COG0169">
    <property type="taxonomic scope" value="Bacteria"/>
</dbReference>
<dbReference type="HOGENOM" id="CLU_044063_2_1_6"/>
<dbReference type="OrthoDB" id="9776868at2"/>
<dbReference type="UniPathway" id="UPA00053">
    <property type="reaction ID" value="UER00087"/>
</dbReference>
<dbReference type="Proteomes" id="UP000000238">
    <property type="component" value="Chromosome"/>
</dbReference>
<dbReference type="GO" id="GO:0005829">
    <property type="term" value="C:cytosol"/>
    <property type="evidence" value="ECO:0007669"/>
    <property type="project" value="TreeGrafter"/>
</dbReference>
<dbReference type="GO" id="GO:0050661">
    <property type="term" value="F:NADP binding"/>
    <property type="evidence" value="ECO:0007669"/>
    <property type="project" value="InterPro"/>
</dbReference>
<dbReference type="GO" id="GO:0004764">
    <property type="term" value="F:shikimate 3-dehydrogenase (NADP+) activity"/>
    <property type="evidence" value="ECO:0007669"/>
    <property type="project" value="UniProtKB-UniRule"/>
</dbReference>
<dbReference type="GO" id="GO:0008652">
    <property type="term" value="P:amino acid biosynthetic process"/>
    <property type="evidence" value="ECO:0007669"/>
    <property type="project" value="UniProtKB-KW"/>
</dbReference>
<dbReference type="GO" id="GO:0009073">
    <property type="term" value="P:aromatic amino acid family biosynthetic process"/>
    <property type="evidence" value="ECO:0007669"/>
    <property type="project" value="UniProtKB-KW"/>
</dbReference>
<dbReference type="GO" id="GO:0009423">
    <property type="term" value="P:chorismate biosynthetic process"/>
    <property type="evidence" value="ECO:0007669"/>
    <property type="project" value="UniProtKB-UniRule"/>
</dbReference>
<dbReference type="GO" id="GO:0019632">
    <property type="term" value="P:shikimate metabolic process"/>
    <property type="evidence" value="ECO:0007669"/>
    <property type="project" value="InterPro"/>
</dbReference>
<dbReference type="CDD" id="cd01065">
    <property type="entry name" value="NAD_bind_Shikimate_DH"/>
    <property type="match status" value="1"/>
</dbReference>
<dbReference type="FunFam" id="3.40.50.10860:FF:000006">
    <property type="entry name" value="Shikimate dehydrogenase (NADP(+))"/>
    <property type="match status" value="1"/>
</dbReference>
<dbReference type="FunFam" id="3.40.50.720:FF:000104">
    <property type="entry name" value="Shikimate dehydrogenase (NADP(+))"/>
    <property type="match status" value="1"/>
</dbReference>
<dbReference type="Gene3D" id="3.40.50.10860">
    <property type="entry name" value="Leucine Dehydrogenase, chain A, domain 1"/>
    <property type="match status" value="1"/>
</dbReference>
<dbReference type="Gene3D" id="3.40.50.720">
    <property type="entry name" value="NAD(P)-binding Rossmann-like Domain"/>
    <property type="match status" value="1"/>
</dbReference>
<dbReference type="HAMAP" id="MF_00222">
    <property type="entry name" value="Shikimate_DH_AroE"/>
    <property type="match status" value="1"/>
</dbReference>
<dbReference type="InterPro" id="IPR046346">
    <property type="entry name" value="Aminoacid_DH-like_N_sf"/>
</dbReference>
<dbReference type="InterPro" id="IPR036291">
    <property type="entry name" value="NAD(P)-bd_dom_sf"/>
</dbReference>
<dbReference type="InterPro" id="IPR041121">
    <property type="entry name" value="SDH_C"/>
</dbReference>
<dbReference type="InterPro" id="IPR011342">
    <property type="entry name" value="Shikimate_DH"/>
</dbReference>
<dbReference type="InterPro" id="IPR013708">
    <property type="entry name" value="Shikimate_DH-bd_N"/>
</dbReference>
<dbReference type="InterPro" id="IPR022893">
    <property type="entry name" value="Shikimate_DH_fam"/>
</dbReference>
<dbReference type="InterPro" id="IPR006151">
    <property type="entry name" value="Shikm_DH/Glu-tRNA_Rdtase"/>
</dbReference>
<dbReference type="NCBIfam" id="TIGR00507">
    <property type="entry name" value="aroE"/>
    <property type="match status" value="1"/>
</dbReference>
<dbReference type="NCBIfam" id="NF001310">
    <property type="entry name" value="PRK00258.1-2"/>
    <property type="match status" value="1"/>
</dbReference>
<dbReference type="PANTHER" id="PTHR21089:SF1">
    <property type="entry name" value="BIFUNCTIONAL 3-DEHYDROQUINATE DEHYDRATASE_SHIKIMATE DEHYDROGENASE, CHLOROPLASTIC"/>
    <property type="match status" value="1"/>
</dbReference>
<dbReference type="PANTHER" id="PTHR21089">
    <property type="entry name" value="SHIKIMATE DEHYDROGENASE"/>
    <property type="match status" value="1"/>
</dbReference>
<dbReference type="Pfam" id="PF18317">
    <property type="entry name" value="SDH_C"/>
    <property type="match status" value="1"/>
</dbReference>
<dbReference type="Pfam" id="PF01488">
    <property type="entry name" value="Shikimate_DH"/>
    <property type="match status" value="1"/>
</dbReference>
<dbReference type="Pfam" id="PF08501">
    <property type="entry name" value="Shikimate_dh_N"/>
    <property type="match status" value="1"/>
</dbReference>
<dbReference type="SUPFAM" id="SSF53223">
    <property type="entry name" value="Aminoacid dehydrogenase-like, N-terminal domain"/>
    <property type="match status" value="1"/>
</dbReference>
<dbReference type="SUPFAM" id="SSF51735">
    <property type="entry name" value="NAD(P)-binding Rossmann-fold domains"/>
    <property type="match status" value="1"/>
</dbReference>
<protein>
    <recommendedName>
        <fullName evidence="1">Shikimate dehydrogenase (NADP(+))</fullName>
        <shortName evidence="1">SDH</shortName>
        <ecNumber evidence="1">1.1.1.25</ecNumber>
    </recommendedName>
</protein>
<keyword id="KW-0028">Amino-acid biosynthesis</keyword>
<keyword id="KW-0057">Aromatic amino acid biosynthesis</keyword>
<keyword id="KW-0521">NADP</keyword>
<keyword id="KW-0560">Oxidoreductase</keyword>
<keyword id="KW-1185">Reference proteome</keyword>
<name>AROE_HAHCH</name>
<evidence type="ECO:0000255" key="1">
    <source>
        <dbReference type="HAMAP-Rule" id="MF_00222"/>
    </source>
</evidence>
<proteinExistence type="inferred from homology"/>